<organism>
    <name type="scientific">Pyrobaculum islandicum (strain DSM 4184 / JCM 9189 / GEO3)</name>
    <dbReference type="NCBI Taxonomy" id="384616"/>
    <lineage>
        <taxon>Archaea</taxon>
        <taxon>Thermoproteota</taxon>
        <taxon>Thermoprotei</taxon>
        <taxon>Thermoproteales</taxon>
        <taxon>Thermoproteaceae</taxon>
        <taxon>Pyrobaculum</taxon>
    </lineage>
</organism>
<dbReference type="EMBL" id="CP000504">
    <property type="protein sequence ID" value="ABL87612.1"/>
    <property type="molecule type" value="Genomic_DNA"/>
</dbReference>
<dbReference type="RefSeq" id="WP_011762189.1">
    <property type="nucleotide sequence ID" value="NC_008701.1"/>
</dbReference>
<dbReference type="SMR" id="A1RRN0"/>
<dbReference type="STRING" id="384616.Pisl_0434"/>
<dbReference type="GeneID" id="52278196"/>
<dbReference type="KEGG" id="pis:Pisl_0434"/>
<dbReference type="eggNOG" id="arCOG04108">
    <property type="taxonomic scope" value="Archaea"/>
</dbReference>
<dbReference type="HOGENOM" id="CLU_199465_0_0_2"/>
<dbReference type="OrthoDB" id="5718at2157"/>
<dbReference type="Proteomes" id="UP000002595">
    <property type="component" value="Chromosome"/>
</dbReference>
<dbReference type="GO" id="GO:1990904">
    <property type="term" value="C:ribonucleoprotein complex"/>
    <property type="evidence" value="ECO:0007669"/>
    <property type="project" value="UniProtKB-KW"/>
</dbReference>
<dbReference type="GO" id="GO:0005840">
    <property type="term" value="C:ribosome"/>
    <property type="evidence" value="ECO:0007669"/>
    <property type="project" value="UniProtKB-KW"/>
</dbReference>
<dbReference type="GO" id="GO:0003735">
    <property type="term" value="F:structural constituent of ribosome"/>
    <property type="evidence" value="ECO:0007669"/>
    <property type="project" value="InterPro"/>
</dbReference>
<dbReference type="GO" id="GO:0008270">
    <property type="term" value="F:zinc ion binding"/>
    <property type="evidence" value="ECO:0007669"/>
    <property type="project" value="UniProtKB-UniRule"/>
</dbReference>
<dbReference type="GO" id="GO:0006412">
    <property type="term" value="P:translation"/>
    <property type="evidence" value="ECO:0007669"/>
    <property type="project" value="UniProtKB-UniRule"/>
</dbReference>
<dbReference type="FunFam" id="2.20.25.100:FF:000002">
    <property type="entry name" value="30S ribosomal protein S27e"/>
    <property type="match status" value="1"/>
</dbReference>
<dbReference type="Gene3D" id="2.20.25.100">
    <property type="entry name" value="Zn-binding ribosomal proteins"/>
    <property type="match status" value="1"/>
</dbReference>
<dbReference type="HAMAP" id="MF_00371">
    <property type="entry name" value="Ribosomal_eS27"/>
    <property type="match status" value="1"/>
</dbReference>
<dbReference type="InterPro" id="IPR000592">
    <property type="entry name" value="Ribosomal_eS27"/>
</dbReference>
<dbReference type="InterPro" id="IPR023407">
    <property type="entry name" value="Ribosomal_eS27_Zn-bd_dom_sf"/>
</dbReference>
<dbReference type="InterPro" id="IPR011332">
    <property type="entry name" value="Ribosomal_zn-bd"/>
</dbReference>
<dbReference type="NCBIfam" id="NF001629">
    <property type="entry name" value="PRK00415.1"/>
    <property type="match status" value="1"/>
</dbReference>
<dbReference type="PANTHER" id="PTHR11594">
    <property type="entry name" value="40S RIBOSOMAL PROTEIN S27"/>
    <property type="match status" value="1"/>
</dbReference>
<dbReference type="Pfam" id="PF01667">
    <property type="entry name" value="Ribosomal_S27e"/>
    <property type="match status" value="1"/>
</dbReference>
<dbReference type="SUPFAM" id="SSF57829">
    <property type="entry name" value="Zn-binding ribosomal proteins"/>
    <property type="match status" value="1"/>
</dbReference>
<dbReference type="PROSITE" id="PS01168">
    <property type="entry name" value="RIBOSOMAL_S27E"/>
    <property type="match status" value="1"/>
</dbReference>
<name>RS27_PYRIL</name>
<feature type="chain" id="PRO_1000007138" description="Small ribosomal subunit protein eS27">
    <location>
        <begin position="1"/>
        <end position="67"/>
    </location>
</feature>
<feature type="zinc finger region" description="C4-type" evidence="1">
    <location>
        <begin position="22"/>
        <end position="44"/>
    </location>
</feature>
<feature type="binding site" evidence="1">
    <location>
        <position position="22"/>
    </location>
    <ligand>
        <name>Zn(2+)</name>
        <dbReference type="ChEBI" id="CHEBI:29105"/>
    </ligand>
</feature>
<feature type="binding site" evidence="1">
    <location>
        <position position="25"/>
    </location>
    <ligand>
        <name>Zn(2+)</name>
        <dbReference type="ChEBI" id="CHEBI:29105"/>
    </ligand>
</feature>
<feature type="binding site" evidence="1">
    <location>
        <position position="41"/>
    </location>
    <ligand>
        <name>Zn(2+)</name>
        <dbReference type="ChEBI" id="CHEBI:29105"/>
    </ligand>
</feature>
<feature type="binding site" evidence="1">
    <location>
        <position position="44"/>
    </location>
    <ligand>
        <name>Zn(2+)</name>
        <dbReference type="ChEBI" id="CHEBI:29105"/>
    </ligand>
</feature>
<gene>
    <name evidence="1" type="primary">rps27e</name>
    <name type="ordered locus">Pisl_0434</name>
</gene>
<reference key="1">
    <citation type="submission" date="2006-12" db="EMBL/GenBank/DDBJ databases">
        <title>Complete sequence of Pyrobaculum islandicum DSM 4184.</title>
        <authorList>
            <person name="Copeland A."/>
            <person name="Lucas S."/>
            <person name="Lapidus A."/>
            <person name="Barry K."/>
            <person name="Detter J.C."/>
            <person name="Glavina del Rio T."/>
            <person name="Dalin E."/>
            <person name="Tice H."/>
            <person name="Pitluck S."/>
            <person name="Meincke L."/>
            <person name="Brettin T."/>
            <person name="Bruce D."/>
            <person name="Han C."/>
            <person name="Tapia R."/>
            <person name="Gilna P."/>
            <person name="Schmutz J."/>
            <person name="Larimer F."/>
            <person name="Land M."/>
            <person name="Hauser L."/>
            <person name="Kyrpides N."/>
            <person name="Mikhailova N."/>
            <person name="Cozen A.E."/>
            <person name="Fitz-Gibbon S.T."/>
            <person name="House C.H."/>
            <person name="Saltikov C."/>
            <person name="Lowe T."/>
            <person name="Richardson P."/>
        </authorList>
    </citation>
    <scope>NUCLEOTIDE SEQUENCE [LARGE SCALE GENOMIC DNA]</scope>
    <source>
        <strain>DSM 4184 / JCM 9189 / GEO3</strain>
    </source>
</reference>
<comment type="cofactor">
    <cofactor evidence="1">
        <name>Zn(2+)</name>
        <dbReference type="ChEBI" id="CHEBI:29105"/>
    </cofactor>
    <text evidence="1">Binds 1 zinc ion per subunit.</text>
</comment>
<comment type="subunit">
    <text evidence="1">Part of the 30S ribosomal subunit.</text>
</comment>
<comment type="similarity">
    <text evidence="1">Belongs to the eukaryotic ribosomal protein eS27 family.</text>
</comment>
<evidence type="ECO:0000255" key="1">
    <source>
        <dbReference type="HAMAP-Rule" id="MF_00371"/>
    </source>
</evidence>
<evidence type="ECO:0000305" key="2"/>
<sequence>MPVKFSKVLIPQPRSKFIKVRCPDCGNEQVVFSHAAMVVRCLVCGRVLAEPTGGKARLAGHVVKILE</sequence>
<keyword id="KW-0479">Metal-binding</keyword>
<keyword id="KW-0687">Ribonucleoprotein</keyword>
<keyword id="KW-0689">Ribosomal protein</keyword>
<keyword id="KW-0862">Zinc</keyword>
<keyword id="KW-0863">Zinc-finger</keyword>
<protein>
    <recommendedName>
        <fullName evidence="1">Small ribosomal subunit protein eS27</fullName>
    </recommendedName>
    <alternativeName>
        <fullName evidence="2">30S ribosomal protein S27e</fullName>
    </alternativeName>
</protein>
<proteinExistence type="inferred from homology"/>
<accession>A1RRN0</accession>